<gene>
    <name evidence="1" type="primary">rpsZ</name>
    <name evidence="1" type="synonym">rpsN</name>
    <name type="ordered locus">Mvan_1335</name>
</gene>
<protein>
    <recommendedName>
        <fullName evidence="1">Small ribosomal subunit protein uS14B</fullName>
    </recommendedName>
    <alternativeName>
        <fullName evidence="2">30S ribosomal protein S14 type Z</fullName>
    </alternativeName>
</protein>
<comment type="function">
    <text evidence="1">Binds 16S rRNA, required for the assembly of 30S particles and may also be responsible for determining the conformation of the 16S rRNA at the A site.</text>
</comment>
<comment type="cofactor">
    <cofactor evidence="1">
        <name>Zn(2+)</name>
        <dbReference type="ChEBI" id="CHEBI:29105"/>
    </cofactor>
    <text evidence="1">Binds 1 zinc ion per subunit.</text>
</comment>
<comment type="subunit">
    <text evidence="1">Part of the 30S ribosomal subunit. Contacts proteins S3 and S10.</text>
</comment>
<comment type="similarity">
    <text evidence="1">Belongs to the universal ribosomal protein uS14 family. Zinc-binding uS14 subfamily.</text>
</comment>
<accession>A1T4R9</accession>
<feature type="chain" id="PRO_1000067958" description="Small ribosomal subunit protein uS14B">
    <location>
        <begin position="1"/>
        <end position="61"/>
    </location>
</feature>
<feature type="binding site" evidence="1">
    <location>
        <position position="24"/>
    </location>
    <ligand>
        <name>Zn(2+)</name>
        <dbReference type="ChEBI" id="CHEBI:29105"/>
    </ligand>
</feature>
<feature type="binding site" evidence="1">
    <location>
        <position position="27"/>
    </location>
    <ligand>
        <name>Zn(2+)</name>
        <dbReference type="ChEBI" id="CHEBI:29105"/>
    </ligand>
</feature>
<feature type="binding site" evidence="1">
    <location>
        <position position="40"/>
    </location>
    <ligand>
        <name>Zn(2+)</name>
        <dbReference type="ChEBI" id="CHEBI:29105"/>
    </ligand>
</feature>
<feature type="binding site" evidence="1">
    <location>
        <position position="43"/>
    </location>
    <ligand>
        <name>Zn(2+)</name>
        <dbReference type="ChEBI" id="CHEBI:29105"/>
    </ligand>
</feature>
<sequence>MAKKALVNKANKKPKFKVRGYTRCNRCGRPHAVFRKFGLCRICLREMAHAGELPGVQKSSW</sequence>
<organism>
    <name type="scientific">Mycolicibacterium vanbaalenii (strain DSM 7251 / JCM 13017 / BCRC 16820 / KCTC 9966 / NRRL B-24157 / PYR-1)</name>
    <name type="common">Mycobacterium vanbaalenii</name>
    <dbReference type="NCBI Taxonomy" id="350058"/>
    <lineage>
        <taxon>Bacteria</taxon>
        <taxon>Bacillati</taxon>
        <taxon>Actinomycetota</taxon>
        <taxon>Actinomycetes</taxon>
        <taxon>Mycobacteriales</taxon>
        <taxon>Mycobacteriaceae</taxon>
        <taxon>Mycolicibacterium</taxon>
    </lineage>
</organism>
<name>RS14Z_MYCVP</name>
<proteinExistence type="inferred from homology"/>
<keyword id="KW-0479">Metal-binding</keyword>
<keyword id="KW-0687">Ribonucleoprotein</keyword>
<keyword id="KW-0689">Ribosomal protein</keyword>
<keyword id="KW-0694">RNA-binding</keyword>
<keyword id="KW-0699">rRNA-binding</keyword>
<keyword id="KW-0862">Zinc</keyword>
<reference key="1">
    <citation type="submission" date="2006-12" db="EMBL/GenBank/DDBJ databases">
        <title>Complete sequence of Mycobacterium vanbaalenii PYR-1.</title>
        <authorList>
            <consortium name="US DOE Joint Genome Institute"/>
            <person name="Copeland A."/>
            <person name="Lucas S."/>
            <person name="Lapidus A."/>
            <person name="Barry K."/>
            <person name="Detter J.C."/>
            <person name="Glavina del Rio T."/>
            <person name="Hammon N."/>
            <person name="Israni S."/>
            <person name="Dalin E."/>
            <person name="Tice H."/>
            <person name="Pitluck S."/>
            <person name="Singan V."/>
            <person name="Schmutz J."/>
            <person name="Larimer F."/>
            <person name="Land M."/>
            <person name="Hauser L."/>
            <person name="Kyrpides N."/>
            <person name="Anderson I.J."/>
            <person name="Miller C."/>
            <person name="Richardson P."/>
        </authorList>
    </citation>
    <scope>NUCLEOTIDE SEQUENCE [LARGE SCALE GENOMIC DNA]</scope>
    <source>
        <strain>DSM 7251 / JCM 13017 / BCRC 16820 / KCTC 9966 / NRRL B-24157 / PYR-1</strain>
    </source>
</reference>
<evidence type="ECO:0000255" key="1">
    <source>
        <dbReference type="HAMAP-Rule" id="MF_01364"/>
    </source>
</evidence>
<evidence type="ECO:0000305" key="2"/>
<dbReference type="EMBL" id="CP000511">
    <property type="protein sequence ID" value="ABM12169.1"/>
    <property type="molecule type" value="Genomic_DNA"/>
</dbReference>
<dbReference type="RefSeq" id="WP_011778599.1">
    <property type="nucleotide sequence ID" value="NZ_JACKSD010000069.1"/>
</dbReference>
<dbReference type="SMR" id="A1T4R9"/>
<dbReference type="STRING" id="350058.Mvan_1335"/>
<dbReference type="KEGG" id="mva:Mvan_1335"/>
<dbReference type="eggNOG" id="COG0199">
    <property type="taxonomic scope" value="Bacteria"/>
</dbReference>
<dbReference type="HOGENOM" id="CLU_139869_3_0_11"/>
<dbReference type="Proteomes" id="UP000009159">
    <property type="component" value="Chromosome"/>
</dbReference>
<dbReference type="GO" id="GO:0005737">
    <property type="term" value="C:cytoplasm"/>
    <property type="evidence" value="ECO:0007669"/>
    <property type="project" value="UniProtKB-ARBA"/>
</dbReference>
<dbReference type="GO" id="GO:0015935">
    <property type="term" value="C:small ribosomal subunit"/>
    <property type="evidence" value="ECO:0007669"/>
    <property type="project" value="TreeGrafter"/>
</dbReference>
<dbReference type="GO" id="GO:0019843">
    <property type="term" value="F:rRNA binding"/>
    <property type="evidence" value="ECO:0007669"/>
    <property type="project" value="UniProtKB-UniRule"/>
</dbReference>
<dbReference type="GO" id="GO:0003735">
    <property type="term" value="F:structural constituent of ribosome"/>
    <property type="evidence" value="ECO:0007669"/>
    <property type="project" value="InterPro"/>
</dbReference>
<dbReference type="GO" id="GO:0008270">
    <property type="term" value="F:zinc ion binding"/>
    <property type="evidence" value="ECO:0007669"/>
    <property type="project" value="UniProtKB-UniRule"/>
</dbReference>
<dbReference type="GO" id="GO:0006412">
    <property type="term" value="P:translation"/>
    <property type="evidence" value="ECO:0007669"/>
    <property type="project" value="UniProtKB-UniRule"/>
</dbReference>
<dbReference type="FunFam" id="4.10.830.10:FF:000001">
    <property type="entry name" value="30S ribosomal protein S14 type Z"/>
    <property type="match status" value="1"/>
</dbReference>
<dbReference type="Gene3D" id="4.10.830.10">
    <property type="entry name" value="30s Ribosomal Protein S14, Chain N"/>
    <property type="match status" value="1"/>
</dbReference>
<dbReference type="HAMAP" id="MF_01364_B">
    <property type="entry name" value="Ribosomal_uS14_2_B"/>
    <property type="match status" value="1"/>
</dbReference>
<dbReference type="InterPro" id="IPR001209">
    <property type="entry name" value="Ribosomal_uS14"/>
</dbReference>
<dbReference type="InterPro" id="IPR023053">
    <property type="entry name" value="Ribosomal_uS14_bact"/>
</dbReference>
<dbReference type="InterPro" id="IPR018271">
    <property type="entry name" value="Ribosomal_uS14_CS"/>
</dbReference>
<dbReference type="InterPro" id="IPR043140">
    <property type="entry name" value="Ribosomal_uS14_sf"/>
</dbReference>
<dbReference type="NCBIfam" id="NF005974">
    <property type="entry name" value="PRK08061.1"/>
    <property type="match status" value="1"/>
</dbReference>
<dbReference type="PANTHER" id="PTHR19836">
    <property type="entry name" value="30S RIBOSOMAL PROTEIN S14"/>
    <property type="match status" value="1"/>
</dbReference>
<dbReference type="PANTHER" id="PTHR19836:SF19">
    <property type="entry name" value="SMALL RIBOSOMAL SUBUNIT PROTEIN US14M"/>
    <property type="match status" value="1"/>
</dbReference>
<dbReference type="Pfam" id="PF00253">
    <property type="entry name" value="Ribosomal_S14"/>
    <property type="match status" value="1"/>
</dbReference>
<dbReference type="SUPFAM" id="SSF57716">
    <property type="entry name" value="Glucocorticoid receptor-like (DNA-binding domain)"/>
    <property type="match status" value="1"/>
</dbReference>
<dbReference type="PROSITE" id="PS00527">
    <property type="entry name" value="RIBOSOMAL_S14"/>
    <property type="match status" value="1"/>
</dbReference>